<comment type="function">
    <text evidence="1">Key component of the proton channel; it plays a direct role in the translocation of protons across the membrane.</text>
</comment>
<comment type="subunit">
    <text evidence="1">F-type ATPases have 2 components, CF(1) - the catalytic core - and CF(0) - the membrane proton channel. CF(1) has five subunits: alpha(3), beta(3), gamma(1), delta(1), epsilon(1). CF(0) has three main subunits: a(1), b(2) and c(9-12). The alpha and beta chains form an alternating ring which encloses part of the gamma chain. CF(1) is attached to CF(0) by a central stalk formed by the gamma and epsilon chains, while a peripheral stalk is formed by the delta and b chains.</text>
</comment>
<comment type="subcellular location">
    <subcellularLocation>
        <location evidence="1">Cell membrane</location>
        <topology evidence="1">Multi-pass membrane protein</topology>
    </subcellularLocation>
</comment>
<comment type="similarity">
    <text evidence="1">Belongs to the ATPase A chain family.</text>
</comment>
<reference key="1">
    <citation type="journal article" date="2009" name="J. Bacteriol.">
        <title>Role of conjugative elements in the evolution of the multidrug-resistant pandemic clone Streptococcus pneumoniae Spain23F ST81.</title>
        <authorList>
            <person name="Croucher N.J."/>
            <person name="Walker D."/>
            <person name="Romero P."/>
            <person name="Lennard N."/>
            <person name="Paterson G.K."/>
            <person name="Bason N.C."/>
            <person name="Mitchell A.M."/>
            <person name="Quail M.A."/>
            <person name="Andrew P.W."/>
            <person name="Parkhill J."/>
            <person name="Bentley S.D."/>
            <person name="Mitchell T.J."/>
        </authorList>
    </citation>
    <scope>NUCLEOTIDE SEQUENCE [LARGE SCALE GENOMIC DNA]</scope>
    <source>
        <strain>ATCC 700669 / Spain 23F-1</strain>
    </source>
</reference>
<dbReference type="EMBL" id="FM211187">
    <property type="protein sequence ID" value="CAR69259.1"/>
    <property type="molecule type" value="Genomic_DNA"/>
</dbReference>
<dbReference type="RefSeq" id="WP_000392851.1">
    <property type="nucleotide sequence ID" value="NC_011900.1"/>
</dbReference>
<dbReference type="SMR" id="B8ZLB4"/>
<dbReference type="GeneID" id="45653248"/>
<dbReference type="KEGG" id="sne:SPN23F14770"/>
<dbReference type="HOGENOM" id="CLU_041018_2_3_9"/>
<dbReference type="GO" id="GO:0005886">
    <property type="term" value="C:plasma membrane"/>
    <property type="evidence" value="ECO:0007669"/>
    <property type="project" value="UniProtKB-SubCell"/>
</dbReference>
<dbReference type="GO" id="GO:0045259">
    <property type="term" value="C:proton-transporting ATP synthase complex"/>
    <property type="evidence" value="ECO:0007669"/>
    <property type="project" value="UniProtKB-KW"/>
</dbReference>
<dbReference type="GO" id="GO:0046933">
    <property type="term" value="F:proton-transporting ATP synthase activity, rotational mechanism"/>
    <property type="evidence" value="ECO:0007669"/>
    <property type="project" value="UniProtKB-UniRule"/>
</dbReference>
<dbReference type="GO" id="GO:0042777">
    <property type="term" value="P:proton motive force-driven plasma membrane ATP synthesis"/>
    <property type="evidence" value="ECO:0007669"/>
    <property type="project" value="TreeGrafter"/>
</dbReference>
<dbReference type="CDD" id="cd00310">
    <property type="entry name" value="ATP-synt_Fo_a_6"/>
    <property type="match status" value="1"/>
</dbReference>
<dbReference type="Gene3D" id="1.20.120.220">
    <property type="entry name" value="ATP synthase, F0 complex, subunit A"/>
    <property type="match status" value="1"/>
</dbReference>
<dbReference type="HAMAP" id="MF_01393">
    <property type="entry name" value="ATP_synth_a_bact"/>
    <property type="match status" value="1"/>
</dbReference>
<dbReference type="InterPro" id="IPR045082">
    <property type="entry name" value="ATP_syn_F0_a_bact/chloroplast"/>
</dbReference>
<dbReference type="InterPro" id="IPR000568">
    <property type="entry name" value="ATP_synth_F0_asu"/>
</dbReference>
<dbReference type="InterPro" id="IPR035908">
    <property type="entry name" value="F0_ATP_A_sf"/>
</dbReference>
<dbReference type="NCBIfam" id="TIGR01131">
    <property type="entry name" value="ATP_synt_6_or_A"/>
    <property type="match status" value="1"/>
</dbReference>
<dbReference type="NCBIfam" id="NF004479">
    <property type="entry name" value="PRK05815.1-4"/>
    <property type="match status" value="1"/>
</dbReference>
<dbReference type="PANTHER" id="PTHR42823">
    <property type="entry name" value="ATP SYNTHASE SUBUNIT A, CHLOROPLASTIC"/>
    <property type="match status" value="1"/>
</dbReference>
<dbReference type="PANTHER" id="PTHR42823:SF3">
    <property type="entry name" value="ATP SYNTHASE SUBUNIT A, CHLOROPLASTIC"/>
    <property type="match status" value="1"/>
</dbReference>
<dbReference type="Pfam" id="PF00119">
    <property type="entry name" value="ATP-synt_A"/>
    <property type="match status" value="1"/>
</dbReference>
<dbReference type="PRINTS" id="PR00123">
    <property type="entry name" value="ATPASEA"/>
</dbReference>
<dbReference type="SUPFAM" id="SSF81336">
    <property type="entry name" value="F1F0 ATP synthase subunit A"/>
    <property type="match status" value="1"/>
</dbReference>
<evidence type="ECO:0000255" key="1">
    <source>
        <dbReference type="HAMAP-Rule" id="MF_01393"/>
    </source>
</evidence>
<keyword id="KW-0066">ATP synthesis</keyword>
<keyword id="KW-1003">Cell membrane</keyword>
<keyword id="KW-0138">CF(0)</keyword>
<keyword id="KW-0375">Hydrogen ion transport</keyword>
<keyword id="KW-0406">Ion transport</keyword>
<keyword id="KW-0472">Membrane</keyword>
<keyword id="KW-0812">Transmembrane</keyword>
<keyword id="KW-1133">Transmembrane helix</keyword>
<keyword id="KW-0813">Transport</keyword>
<proteinExistence type="inferred from homology"/>
<name>ATP6_STRPJ</name>
<protein>
    <recommendedName>
        <fullName evidence="1">ATP synthase subunit a</fullName>
    </recommendedName>
    <alternativeName>
        <fullName evidence="1">ATP synthase F0 sector subunit a</fullName>
    </alternativeName>
    <alternativeName>
        <fullName evidence="1">F-ATPase subunit 6</fullName>
    </alternativeName>
</protein>
<sequence>MEESINPIISIGPVIFNLTMLAMTLLIVGVIFVFIYWASRNMTLKPKGKQNVLEYVYDFVIGFTEPNIGSRYMKDYSLFFLCLFLFMVIANNLGLMTKLQTIDGTNWWSSPTANLQYDLTLSFLVILLTHIESVRRRGFKKSIKSFMSPVFVIPMNILEEFTNFLSLALRIFGNIFAGEVMTSLLLLLSHQAIYWYPVAFGANLAWTAFSVFISCIQAYVFTLLTSVYLGNKINIEEE</sequence>
<feature type="chain" id="PRO_1000184293" description="ATP synthase subunit a">
    <location>
        <begin position="1"/>
        <end position="238"/>
    </location>
</feature>
<feature type="transmembrane region" description="Helical" evidence="1">
    <location>
        <begin position="15"/>
        <end position="35"/>
    </location>
</feature>
<feature type="transmembrane region" description="Helical" evidence="1">
    <location>
        <begin position="76"/>
        <end position="96"/>
    </location>
</feature>
<feature type="transmembrane region" description="Helical" evidence="1">
    <location>
        <begin position="111"/>
        <end position="131"/>
    </location>
</feature>
<feature type="transmembrane region" description="Helical" evidence="1">
    <location>
        <begin position="167"/>
        <end position="187"/>
    </location>
</feature>
<feature type="transmembrane region" description="Helical" evidence="1">
    <location>
        <begin position="208"/>
        <end position="230"/>
    </location>
</feature>
<gene>
    <name evidence="1" type="primary">atpB</name>
    <name type="ordered locus">SPN23F14770</name>
</gene>
<accession>B8ZLB4</accession>
<organism>
    <name type="scientific">Streptococcus pneumoniae (strain ATCC 700669 / Spain 23F-1)</name>
    <dbReference type="NCBI Taxonomy" id="561276"/>
    <lineage>
        <taxon>Bacteria</taxon>
        <taxon>Bacillati</taxon>
        <taxon>Bacillota</taxon>
        <taxon>Bacilli</taxon>
        <taxon>Lactobacillales</taxon>
        <taxon>Streptococcaceae</taxon>
        <taxon>Streptococcus</taxon>
    </lineage>
</organism>